<organism>
    <name type="scientific">Salmonella gallinarum (strain 287/91 / NCTC 13346)</name>
    <dbReference type="NCBI Taxonomy" id="550538"/>
    <lineage>
        <taxon>Bacteria</taxon>
        <taxon>Pseudomonadati</taxon>
        <taxon>Pseudomonadota</taxon>
        <taxon>Gammaproteobacteria</taxon>
        <taxon>Enterobacterales</taxon>
        <taxon>Enterobacteriaceae</taxon>
        <taxon>Salmonella</taxon>
    </lineage>
</organism>
<evidence type="ECO:0000255" key="1">
    <source>
        <dbReference type="HAMAP-Rule" id="MF_01545"/>
    </source>
</evidence>
<gene>
    <name evidence="1" type="primary">aaeB</name>
    <name type="ordered locus">SG3254</name>
</gene>
<protein>
    <recommendedName>
        <fullName evidence="1">p-hydroxybenzoic acid efflux pump subunit AaeB</fullName>
        <shortName evidence="1">pHBA efflux pump protein B</shortName>
    </recommendedName>
</protein>
<accession>B5REW2</accession>
<feature type="chain" id="PRO_1000146743" description="p-hydroxybenzoic acid efflux pump subunit AaeB">
    <location>
        <begin position="1"/>
        <end position="655"/>
    </location>
</feature>
<feature type="transmembrane region" description="Helical" evidence="1">
    <location>
        <begin position="13"/>
        <end position="33"/>
    </location>
</feature>
<feature type="transmembrane region" description="Helical" evidence="1">
    <location>
        <begin position="38"/>
        <end position="58"/>
    </location>
</feature>
<feature type="transmembrane region" description="Helical" evidence="1">
    <location>
        <begin position="69"/>
        <end position="89"/>
    </location>
</feature>
<feature type="transmembrane region" description="Helical" evidence="1">
    <location>
        <begin position="93"/>
        <end position="113"/>
    </location>
</feature>
<feature type="transmembrane region" description="Helical" evidence="1">
    <location>
        <begin position="121"/>
        <end position="141"/>
    </location>
</feature>
<feature type="transmembrane region" description="Helical" evidence="1">
    <location>
        <begin position="152"/>
        <end position="172"/>
    </location>
</feature>
<feature type="transmembrane region" description="Helical" evidence="1">
    <location>
        <begin position="370"/>
        <end position="390"/>
    </location>
</feature>
<feature type="transmembrane region" description="Helical" evidence="1">
    <location>
        <begin position="407"/>
        <end position="427"/>
    </location>
</feature>
<feature type="transmembrane region" description="Helical" evidence="1">
    <location>
        <begin position="431"/>
        <end position="451"/>
    </location>
</feature>
<feature type="transmembrane region" description="Helical" evidence="1">
    <location>
        <begin position="459"/>
        <end position="479"/>
    </location>
</feature>
<feature type="transmembrane region" description="Helical" evidence="1">
    <location>
        <begin position="482"/>
        <end position="502"/>
    </location>
</feature>
<name>AAEB_SALG2</name>
<dbReference type="EMBL" id="AM933173">
    <property type="protein sequence ID" value="CAR39052.1"/>
    <property type="molecule type" value="Genomic_DNA"/>
</dbReference>
<dbReference type="RefSeq" id="WP_000510913.1">
    <property type="nucleotide sequence ID" value="NC_011274.1"/>
</dbReference>
<dbReference type="SMR" id="B5REW2"/>
<dbReference type="KEGG" id="seg:SG3254"/>
<dbReference type="HOGENOM" id="CLU_027647_0_0_6"/>
<dbReference type="Proteomes" id="UP000008321">
    <property type="component" value="Chromosome"/>
</dbReference>
<dbReference type="GO" id="GO:0005886">
    <property type="term" value="C:plasma membrane"/>
    <property type="evidence" value="ECO:0007669"/>
    <property type="project" value="UniProtKB-SubCell"/>
</dbReference>
<dbReference type="GO" id="GO:0022857">
    <property type="term" value="F:transmembrane transporter activity"/>
    <property type="evidence" value="ECO:0007669"/>
    <property type="project" value="UniProtKB-UniRule"/>
</dbReference>
<dbReference type="GO" id="GO:0046942">
    <property type="term" value="P:carboxylic acid transport"/>
    <property type="evidence" value="ECO:0007669"/>
    <property type="project" value="InterPro"/>
</dbReference>
<dbReference type="HAMAP" id="MF_01545">
    <property type="entry name" value="AaeB"/>
    <property type="match status" value="1"/>
</dbReference>
<dbReference type="InterPro" id="IPR006726">
    <property type="entry name" value="PHBA_efflux_AaeB/fusaric-R"/>
</dbReference>
<dbReference type="InterPro" id="IPR023706">
    <property type="entry name" value="PHBA_efflux_pump_AaeB"/>
</dbReference>
<dbReference type="NCBIfam" id="NF007916">
    <property type="entry name" value="PRK10631.1"/>
    <property type="match status" value="1"/>
</dbReference>
<dbReference type="PANTHER" id="PTHR30509:SF9">
    <property type="entry name" value="MULTIDRUG RESISTANCE PROTEIN MDTO"/>
    <property type="match status" value="1"/>
</dbReference>
<dbReference type="PANTHER" id="PTHR30509">
    <property type="entry name" value="P-HYDROXYBENZOIC ACID EFFLUX PUMP SUBUNIT-RELATED"/>
    <property type="match status" value="1"/>
</dbReference>
<dbReference type="Pfam" id="PF04632">
    <property type="entry name" value="FUSC"/>
    <property type="match status" value="1"/>
</dbReference>
<comment type="function">
    <text evidence="1">Forms an efflux pump with AaeA. Could function as a metabolic relief valve, allowing to eliminate certain compounds when they accumulate to high levels in the cell.</text>
</comment>
<comment type="subcellular location">
    <subcellularLocation>
        <location evidence="1">Cell inner membrane</location>
        <topology evidence="1">Multi-pass membrane protein</topology>
    </subcellularLocation>
</comment>
<comment type="similarity">
    <text evidence="1">Belongs to the aromatic acid exporter ArAE (TC 2.A.85) family.</text>
</comment>
<keyword id="KW-0997">Cell inner membrane</keyword>
<keyword id="KW-1003">Cell membrane</keyword>
<keyword id="KW-0472">Membrane</keyword>
<keyword id="KW-0812">Transmembrane</keyword>
<keyword id="KW-1133">Transmembrane helix</keyword>
<keyword id="KW-0813">Transport</keyword>
<reference key="1">
    <citation type="journal article" date="2008" name="Genome Res.">
        <title>Comparative genome analysis of Salmonella enteritidis PT4 and Salmonella gallinarum 287/91 provides insights into evolutionary and host adaptation pathways.</title>
        <authorList>
            <person name="Thomson N.R."/>
            <person name="Clayton D.J."/>
            <person name="Windhorst D."/>
            <person name="Vernikos G."/>
            <person name="Davidson S."/>
            <person name="Churcher C."/>
            <person name="Quail M.A."/>
            <person name="Stevens M."/>
            <person name="Jones M.A."/>
            <person name="Watson M."/>
            <person name="Barron A."/>
            <person name="Layton A."/>
            <person name="Pickard D."/>
            <person name="Kingsley R.A."/>
            <person name="Bignell A."/>
            <person name="Clark L."/>
            <person name="Harris B."/>
            <person name="Ormond D."/>
            <person name="Abdellah Z."/>
            <person name="Brooks K."/>
            <person name="Cherevach I."/>
            <person name="Chillingworth T."/>
            <person name="Woodward J."/>
            <person name="Norberczak H."/>
            <person name="Lord A."/>
            <person name="Arrowsmith C."/>
            <person name="Jagels K."/>
            <person name="Moule S."/>
            <person name="Mungall K."/>
            <person name="Saunders M."/>
            <person name="Whitehead S."/>
            <person name="Chabalgoity J.A."/>
            <person name="Maskell D."/>
            <person name="Humphreys T."/>
            <person name="Roberts M."/>
            <person name="Barrow P.A."/>
            <person name="Dougan G."/>
            <person name="Parkhill J."/>
        </authorList>
    </citation>
    <scope>NUCLEOTIDE SEQUENCE [LARGE SCALE GENOMIC DNA]</scope>
    <source>
        <strain>287/91 / NCTC 13346</strain>
    </source>
</reference>
<sequence length="655" mass="73646">MGIFSIANQHIRFAVKLACAIVLALFIGFHFQLETPRWAVLTAAIVAAGPAFAAGGEPYSGAIRYRGMLRIIGTFIGCIAALIIIISMIRAPLLMILVCCVWAGFCTWISSLVRIENSYAWGLSGYTALIIVITIQTEPLLTPQFALERCSEIVIGIGCAILADLLFSPRSIKQEVDRELDSLLVAQYQLMQLCIKHGDSEEVDNAWGDLVRRTAALEGMRSNLNMESSRWVRANRRLKALNTLSLTLITQSCETYLIQNTRPELITDTFRELFETPVETVQDVHRQLKRMRRVIVWTGERETPVTLYSWVGAATRYLLLKRGVISNTKISATEEEILQGEPVVKVESAERHHAMVNFWRTTLSCILGTLFWLWTGWTSGNGAMVMIAVVTSLAMRLPNPRMVCIDFIYGTLAALPLGLLYFLVIIPNTQQSMLLLCLSLAVLGFFIGIEVQKRRLGSMGALASTINIIVLDNPMTFHFSQFLDSALGQIVGCMLAFIVILLVRDKSKDRTGRVLLNQFVSAAVSAMTTNVVRRKENRLPALYQQLFLLMNKFPGDLPKFRLALTMIIAHQRLRDAPIPVNEDLSVFHRQLRRTADHVISAGSDDKRRRYFGQLLDELDIYQEKLRIWEAPPQVTEPVKRLTGMLHKYQNALTDS</sequence>
<proteinExistence type="inferred from homology"/>